<comment type="function">
    <text evidence="1">Catalyzes the reversible formation of fructose 6-phosphate from dihydroxyacetone and D-glyceraldehyde 3-phosphate via an aldolization reaction.</text>
</comment>
<comment type="catalytic activity">
    <reaction evidence="1">
        <text>beta-D-fructose 6-phosphate = dihydroxyacetone + D-glyceraldehyde 3-phosphate</text>
        <dbReference type="Rhea" id="RHEA:28002"/>
        <dbReference type="ChEBI" id="CHEBI:16016"/>
        <dbReference type="ChEBI" id="CHEBI:57634"/>
        <dbReference type="ChEBI" id="CHEBI:59776"/>
    </reaction>
</comment>
<comment type="subunit">
    <text evidence="1">Homodecamer.</text>
</comment>
<comment type="subcellular location">
    <subcellularLocation>
        <location evidence="1">Cytoplasm</location>
    </subcellularLocation>
</comment>
<comment type="similarity">
    <text evidence="1">Belongs to the transaldolase family. Type 3A subfamily.</text>
</comment>
<gene>
    <name evidence="1" type="primary">fsa</name>
    <name type="ordered locus">SSPA3680</name>
</gene>
<protein>
    <recommendedName>
        <fullName evidence="1">Fructose-6-phosphate aldolase</fullName>
        <ecNumber evidence="1">4.1.2.-</ecNumber>
    </recommendedName>
</protein>
<accession>B5BJM7</accession>
<name>FSA_SALPK</name>
<proteinExistence type="inferred from homology"/>
<sequence length="220" mass="23525">MELYLDTANVAEVERLARIFPIAGVTTNPSIVAASKESIWDVLPRLQNAIGEEGTLFAQTMSRDAKGMVEEAKRLNNAIPGIVVKIPVTAEGLAAIKLLKKEGIVTLGTAVYSASQGLLAALAGAKYVAPYVNRVDAQGGDGIRMVQELQTLLEHHAPDSMVLAASFKTPRQALDCLLAGCQAITLPLDVAQQMLNTPAVESAIEKFEQDWKNAFGNLNL</sequence>
<keyword id="KW-0119">Carbohydrate metabolism</keyword>
<keyword id="KW-0963">Cytoplasm</keyword>
<keyword id="KW-0456">Lyase</keyword>
<keyword id="KW-0704">Schiff base</keyword>
<reference key="1">
    <citation type="journal article" date="2009" name="BMC Genomics">
        <title>Pseudogene accumulation in the evolutionary histories of Salmonella enterica serovars Paratyphi A and Typhi.</title>
        <authorList>
            <person name="Holt K.E."/>
            <person name="Thomson N.R."/>
            <person name="Wain J."/>
            <person name="Langridge G.C."/>
            <person name="Hasan R."/>
            <person name="Bhutta Z.A."/>
            <person name="Quail M.A."/>
            <person name="Norbertczak H."/>
            <person name="Walker D."/>
            <person name="Simmonds M."/>
            <person name="White B."/>
            <person name="Bason N."/>
            <person name="Mungall K."/>
            <person name="Dougan G."/>
            <person name="Parkhill J."/>
        </authorList>
    </citation>
    <scope>NUCLEOTIDE SEQUENCE [LARGE SCALE GENOMIC DNA]</scope>
    <source>
        <strain>AKU_12601</strain>
    </source>
</reference>
<feature type="chain" id="PRO_1000126379" description="Fructose-6-phosphate aldolase">
    <location>
        <begin position="1"/>
        <end position="220"/>
    </location>
</feature>
<feature type="active site" description="Schiff-base intermediate with substrate" evidence="1">
    <location>
        <position position="85"/>
    </location>
</feature>
<organism>
    <name type="scientific">Salmonella paratyphi A (strain AKU_12601)</name>
    <dbReference type="NCBI Taxonomy" id="554290"/>
    <lineage>
        <taxon>Bacteria</taxon>
        <taxon>Pseudomonadati</taxon>
        <taxon>Pseudomonadota</taxon>
        <taxon>Gammaproteobacteria</taxon>
        <taxon>Enterobacterales</taxon>
        <taxon>Enterobacteriaceae</taxon>
        <taxon>Salmonella</taxon>
    </lineage>
</organism>
<evidence type="ECO:0000255" key="1">
    <source>
        <dbReference type="HAMAP-Rule" id="MF_00496"/>
    </source>
</evidence>
<dbReference type="EC" id="4.1.2.-" evidence="1"/>
<dbReference type="EMBL" id="FM200053">
    <property type="protein sequence ID" value="CAR61963.1"/>
    <property type="molecule type" value="Genomic_DNA"/>
</dbReference>
<dbReference type="RefSeq" id="WP_000424866.1">
    <property type="nucleotide sequence ID" value="NC_011147.1"/>
</dbReference>
<dbReference type="SMR" id="B5BJM7"/>
<dbReference type="KEGG" id="sek:SSPA3680"/>
<dbReference type="HOGENOM" id="CLU_079764_2_0_6"/>
<dbReference type="Proteomes" id="UP000001869">
    <property type="component" value="Chromosome"/>
</dbReference>
<dbReference type="GO" id="GO:0005737">
    <property type="term" value="C:cytoplasm"/>
    <property type="evidence" value="ECO:0007669"/>
    <property type="project" value="UniProtKB-SubCell"/>
</dbReference>
<dbReference type="GO" id="GO:0097023">
    <property type="term" value="F:fructose 6-phosphate aldolase activity"/>
    <property type="evidence" value="ECO:0007669"/>
    <property type="project" value="RHEA"/>
</dbReference>
<dbReference type="GO" id="GO:0006000">
    <property type="term" value="P:fructose metabolic process"/>
    <property type="evidence" value="ECO:0007669"/>
    <property type="project" value="UniProtKB-UniRule"/>
</dbReference>
<dbReference type="CDD" id="cd00956">
    <property type="entry name" value="Transaldolase_FSA"/>
    <property type="match status" value="1"/>
</dbReference>
<dbReference type="FunFam" id="3.20.20.70:FF:000018">
    <property type="entry name" value="Probable transaldolase"/>
    <property type="match status" value="1"/>
</dbReference>
<dbReference type="Gene3D" id="3.20.20.70">
    <property type="entry name" value="Aldolase class I"/>
    <property type="match status" value="1"/>
</dbReference>
<dbReference type="HAMAP" id="MF_00496">
    <property type="entry name" value="F6P_aldolase"/>
    <property type="match status" value="1"/>
</dbReference>
<dbReference type="InterPro" id="IPR013785">
    <property type="entry name" value="Aldolase_TIM"/>
</dbReference>
<dbReference type="InterPro" id="IPR023001">
    <property type="entry name" value="F6P_aldolase"/>
</dbReference>
<dbReference type="InterPro" id="IPR001585">
    <property type="entry name" value="TAL/FSA"/>
</dbReference>
<dbReference type="InterPro" id="IPR004731">
    <property type="entry name" value="Transaldolase_3B/F6P_aldolase"/>
</dbReference>
<dbReference type="InterPro" id="IPR018225">
    <property type="entry name" value="Transaldolase_AS"/>
</dbReference>
<dbReference type="InterPro" id="IPR033919">
    <property type="entry name" value="TSA/FSA_arc/bac"/>
</dbReference>
<dbReference type="NCBIfam" id="TIGR00875">
    <property type="entry name" value="fsa_talC_mipB"/>
    <property type="match status" value="1"/>
</dbReference>
<dbReference type="NCBIfam" id="NF009296">
    <property type="entry name" value="PRK12653.1"/>
    <property type="match status" value="1"/>
</dbReference>
<dbReference type="PANTHER" id="PTHR10683:SF40">
    <property type="entry name" value="FRUCTOSE-6-PHOSPHATE ALDOLASE 1-RELATED"/>
    <property type="match status" value="1"/>
</dbReference>
<dbReference type="PANTHER" id="PTHR10683">
    <property type="entry name" value="TRANSALDOLASE"/>
    <property type="match status" value="1"/>
</dbReference>
<dbReference type="Pfam" id="PF00923">
    <property type="entry name" value="TAL_FSA"/>
    <property type="match status" value="1"/>
</dbReference>
<dbReference type="SUPFAM" id="SSF51569">
    <property type="entry name" value="Aldolase"/>
    <property type="match status" value="1"/>
</dbReference>
<dbReference type="PROSITE" id="PS01054">
    <property type="entry name" value="TRANSALDOLASE_1"/>
    <property type="match status" value="1"/>
</dbReference>
<dbReference type="PROSITE" id="PS00958">
    <property type="entry name" value="TRANSALDOLASE_2"/>
    <property type="match status" value="1"/>
</dbReference>